<accession>Q9RYR9</accession>
<sequence length="269" mass="28235">MVQPSPAPVVTITPAPAPAAPSHPHGWKRKQEFKALHLALAFLTTLPLPHVRDVQPGDFARASAYYPLAGYAVGGLVAGLLYLNVPLPPGVVAALGVGLWLGLTGMLHFDGLVDSADALFAMKSPEQRLDILKDVHVGAFGLATGVLALLLLWSLLGAGLPWYAPLVAAVVARMVVLMPMNAYPAARQESLGAQSRQGRWGLAFLFALPALLLPHAWLAALVALLGVTLVAAWAARRLGGGLSGDVYGLLIVVAELLVLGFYGWGFTPL</sequence>
<evidence type="ECO:0000255" key="1">
    <source>
        <dbReference type="HAMAP-Rule" id="MF_00719"/>
    </source>
</evidence>
<comment type="function">
    <text evidence="1">Joins adenosylcobinamide-GDP and alpha-ribazole to generate adenosylcobalamin (Ado-cobalamin). Also synthesizes adenosylcobalamin 5'-phosphate from adenosylcobinamide-GDP and alpha-ribazole 5'-phosphate.</text>
</comment>
<comment type="catalytic activity">
    <reaction evidence="1">
        <text>alpha-ribazole + adenosylcob(III)inamide-GDP = adenosylcob(III)alamin + GMP + H(+)</text>
        <dbReference type="Rhea" id="RHEA:16049"/>
        <dbReference type="ChEBI" id="CHEBI:10329"/>
        <dbReference type="ChEBI" id="CHEBI:15378"/>
        <dbReference type="ChEBI" id="CHEBI:18408"/>
        <dbReference type="ChEBI" id="CHEBI:58115"/>
        <dbReference type="ChEBI" id="CHEBI:60487"/>
        <dbReference type="EC" id="2.7.8.26"/>
    </reaction>
</comment>
<comment type="catalytic activity">
    <reaction evidence="1">
        <text>alpha-ribazole 5'-phosphate + adenosylcob(III)inamide-GDP = adenosylcob(III)alamin 5'-phosphate + GMP + H(+)</text>
        <dbReference type="Rhea" id="RHEA:23560"/>
        <dbReference type="ChEBI" id="CHEBI:15378"/>
        <dbReference type="ChEBI" id="CHEBI:57918"/>
        <dbReference type="ChEBI" id="CHEBI:58115"/>
        <dbReference type="ChEBI" id="CHEBI:60487"/>
        <dbReference type="ChEBI" id="CHEBI:60493"/>
        <dbReference type="EC" id="2.7.8.26"/>
    </reaction>
</comment>
<comment type="cofactor">
    <cofactor evidence="1">
        <name>Mg(2+)</name>
        <dbReference type="ChEBI" id="CHEBI:18420"/>
    </cofactor>
</comment>
<comment type="pathway">
    <text evidence="1">Cofactor biosynthesis; adenosylcobalamin biosynthesis; adenosylcobalamin from cob(II)yrinate a,c-diamide: step 7/7.</text>
</comment>
<comment type="subcellular location">
    <subcellularLocation>
        <location evidence="1">Cell membrane</location>
        <topology evidence="1">Multi-pass membrane protein</topology>
    </subcellularLocation>
</comment>
<comment type="similarity">
    <text evidence="1">Belongs to the CobS family.</text>
</comment>
<keyword id="KW-1003">Cell membrane</keyword>
<keyword id="KW-0169">Cobalamin biosynthesis</keyword>
<keyword id="KW-0460">Magnesium</keyword>
<keyword id="KW-0472">Membrane</keyword>
<keyword id="KW-1185">Reference proteome</keyword>
<keyword id="KW-0808">Transferase</keyword>
<keyword id="KW-0812">Transmembrane</keyword>
<keyword id="KW-1133">Transmembrane helix</keyword>
<proteinExistence type="inferred from homology"/>
<organism>
    <name type="scientific">Deinococcus radiodurans (strain ATCC 13939 / DSM 20539 / JCM 16871 / CCUG 27074 / LMG 4051 / NBRC 15346 / NCIMB 9279 / VKM B-1422 / R1)</name>
    <dbReference type="NCBI Taxonomy" id="243230"/>
    <lineage>
        <taxon>Bacteria</taxon>
        <taxon>Thermotogati</taxon>
        <taxon>Deinococcota</taxon>
        <taxon>Deinococci</taxon>
        <taxon>Deinococcales</taxon>
        <taxon>Deinococcaceae</taxon>
        <taxon>Deinococcus</taxon>
    </lineage>
</organism>
<gene>
    <name evidence="1" type="primary">cobS</name>
    <name type="ordered locus">DR_A0239</name>
</gene>
<dbReference type="EC" id="2.7.8.26" evidence="1"/>
<dbReference type="EMBL" id="AE001825">
    <property type="protein sequence ID" value="AAF12398.1"/>
    <property type="molecule type" value="Genomic_DNA"/>
</dbReference>
<dbReference type="PIR" id="H75576">
    <property type="entry name" value="H75576"/>
</dbReference>
<dbReference type="RefSeq" id="NP_285562.1">
    <property type="nucleotide sequence ID" value="NC_001264.1"/>
</dbReference>
<dbReference type="RefSeq" id="WP_010889498.1">
    <property type="nucleotide sequence ID" value="NC_001264.1"/>
</dbReference>
<dbReference type="STRING" id="243230.DR_A0239"/>
<dbReference type="PaxDb" id="243230-DR_A0239"/>
<dbReference type="EnsemblBacteria" id="AAF12398">
    <property type="protein sequence ID" value="AAF12398"/>
    <property type="gene ID" value="DR_A0239"/>
</dbReference>
<dbReference type="GeneID" id="69519133"/>
<dbReference type="KEGG" id="dra:DR_A0239"/>
<dbReference type="PATRIC" id="fig|243230.17.peg.3129"/>
<dbReference type="eggNOG" id="COG0368">
    <property type="taxonomic scope" value="Bacteria"/>
</dbReference>
<dbReference type="HOGENOM" id="CLU_057426_1_0_0"/>
<dbReference type="InParanoid" id="Q9RYR9"/>
<dbReference type="OrthoDB" id="9794626at2"/>
<dbReference type="UniPathway" id="UPA00148">
    <property type="reaction ID" value="UER00238"/>
</dbReference>
<dbReference type="Proteomes" id="UP000002524">
    <property type="component" value="Chromosome 2"/>
</dbReference>
<dbReference type="GO" id="GO:0005886">
    <property type="term" value="C:plasma membrane"/>
    <property type="evidence" value="ECO:0007669"/>
    <property type="project" value="UniProtKB-SubCell"/>
</dbReference>
<dbReference type="GO" id="GO:0051073">
    <property type="term" value="F:adenosylcobinamide-GDP ribazoletransferase activity"/>
    <property type="evidence" value="ECO:0007669"/>
    <property type="project" value="UniProtKB-UniRule"/>
</dbReference>
<dbReference type="GO" id="GO:0008818">
    <property type="term" value="F:cobalamin 5'-phosphate synthase activity"/>
    <property type="evidence" value="ECO:0007669"/>
    <property type="project" value="UniProtKB-UniRule"/>
</dbReference>
<dbReference type="GO" id="GO:0009236">
    <property type="term" value="P:cobalamin biosynthetic process"/>
    <property type="evidence" value="ECO:0000318"/>
    <property type="project" value="GO_Central"/>
</dbReference>
<dbReference type="HAMAP" id="MF_00719">
    <property type="entry name" value="CobS"/>
    <property type="match status" value="1"/>
</dbReference>
<dbReference type="InterPro" id="IPR003805">
    <property type="entry name" value="CobS"/>
</dbReference>
<dbReference type="PANTHER" id="PTHR34148">
    <property type="entry name" value="ADENOSYLCOBINAMIDE-GDP RIBAZOLETRANSFERASE"/>
    <property type="match status" value="1"/>
</dbReference>
<dbReference type="PANTHER" id="PTHR34148:SF1">
    <property type="entry name" value="ADENOSYLCOBINAMIDE-GDP RIBAZOLETRANSFERASE"/>
    <property type="match status" value="1"/>
</dbReference>
<dbReference type="Pfam" id="PF02654">
    <property type="entry name" value="CobS"/>
    <property type="match status" value="1"/>
</dbReference>
<name>COBS_DEIRA</name>
<protein>
    <recommendedName>
        <fullName evidence="1">Adenosylcobinamide-GDP ribazoletransferase</fullName>
        <ecNumber evidence="1">2.7.8.26</ecNumber>
    </recommendedName>
    <alternativeName>
        <fullName evidence="1">Cobalamin synthase</fullName>
    </alternativeName>
    <alternativeName>
        <fullName evidence="1">Cobalamin-5'-phosphate synthase</fullName>
    </alternativeName>
</protein>
<reference key="1">
    <citation type="journal article" date="1999" name="Science">
        <title>Genome sequence of the radioresistant bacterium Deinococcus radiodurans R1.</title>
        <authorList>
            <person name="White O."/>
            <person name="Eisen J.A."/>
            <person name="Heidelberg J.F."/>
            <person name="Hickey E.K."/>
            <person name="Peterson J.D."/>
            <person name="Dodson R.J."/>
            <person name="Haft D.H."/>
            <person name="Gwinn M.L."/>
            <person name="Nelson W.C."/>
            <person name="Richardson D.L."/>
            <person name="Moffat K.S."/>
            <person name="Qin H."/>
            <person name="Jiang L."/>
            <person name="Pamphile W."/>
            <person name="Crosby M."/>
            <person name="Shen M."/>
            <person name="Vamathevan J.J."/>
            <person name="Lam P."/>
            <person name="McDonald L.A."/>
            <person name="Utterback T.R."/>
            <person name="Zalewski C."/>
            <person name="Makarova K.S."/>
            <person name="Aravind L."/>
            <person name="Daly M.J."/>
            <person name="Minton K.W."/>
            <person name="Fleischmann R.D."/>
            <person name="Ketchum K.A."/>
            <person name="Nelson K.E."/>
            <person name="Salzberg S.L."/>
            <person name="Smith H.O."/>
            <person name="Venter J.C."/>
            <person name="Fraser C.M."/>
        </authorList>
    </citation>
    <scope>NUCLEOTIDE SEQUENCE [LARGE SCALE GENOMIC DNA]</scope>
    <source>
        <strain>ATCC 13939 / DSM 20539 / JCM 16871 / CCUG 27074 / LMG 4051 / NBRC 15346 / NCIMB 9279 / VKM B-1422 / R1</strain>
    </source>
</reference>
<feature type="chain" id="PRO_0000146875" description="Adenosylcobinamide-GDP ribazoletransferase">
    <location>
        <begin position="1"/>
        <end position="269"/>
    </location>
</feature>
<feature type="transmembrane region" description="Helical" evidence="1">
    <location>
        <begin position="63"/>
        <end position="83"/>
    </location>
</feature>
<feature type="transmembrane region" description="Helical" evidence="1">
    <location>
        <begin position="87"/>
        <end position="107"/>
    </location>
</feature>
<feature type="transmembrane region" description="Helical" evidence="1">
    <location>
        <begin position="137"/>
        <end position="157"/>
    </location>
</feature>
<feature type="transmembrane region" description="Helical" evidence="1">
    <location>
        <begin position="158"/>
        <end position="178"/>
    </location>
</feature>
<feature type="transmembrane region" description="Helical" evidence="1">
    <location>
        <begin position="202"/>
        <end position="222"/>
    </location>
</feature>
<feature type="transmembrane region" description="Helical" evidence="1">
    <location>
        <begin position="246"/>
        <end position="266"/>
    </location>
</feature>